<name>GPDH2_ORYSJ</name>
<reference key="1">
    <citation type="journal article" date="2002" name="Nature">
        <title>The genome sequence and structure of rice chromosome 1.</title>
        <authorList>
            <person name="Sasaki T."/>
            <person name="Matsumoto T."/>
            <person name="Yamamoto K."/>
            <person name="Sakata K."/>
            <person name="Baba T."/>
            <person name="Katayose Y."/>
            <person name="Wu J."/>
            <person name="Niimura Y."/>
            <person name="Cheng Z."/>
            <person name="Nagamura Y."/>
            <person name="Antonio B.A."/>
            <person name="Kanamori H."/>
            <person name="Hosokawa S."/>
            <person name="Masukawa M."/>
            <person name="Arikawa K."/>
            <person name="Chiden Y."/>
            <person name="Hayashi M."/>
            <person name="Okamoto M."/>
            <person name="Ando T."/>
            <person name="Aoki H."/>
            <person name="Arita K."/>
            <person name="Hamada M."/>
            <person name="Harada C."/>
            <person name="Hijishita S."/>
            <person name="Honda M."/>
            <person name="Ichikawa Y."/>
            <person name="Idonuma A."/>
            <person name="Iijima M."/>
            <person name="Ikeda M."/>
            <person name="Ikeno M."/>
            <person name="Ito S."/>
            <person name="Ito T."/>
            <person name="Ito Y."/>
            <person name="Ito Y."/>
            <person name="Iwabuchi A."/>
            <person name="Kamiya K."/>
            <person name="Karasawa W."/>
            <person name="Katagiri S."/>
            <person name="Kikuta A."/>
            <person name="Kobayashi N."/>
            <person name="Kono I."/>
            <person name="Machita K."/>
            <person name="Maehara T."/>
            <person name="Mizuno H."/>
            <person name="Mizubayashi T."/>
            <person name="Mukai Y."/>
            <person name="Nagasaki H."/>
            <person name="Nakashima M."/>
            <person name="Nakama Y."/>
            <person name="Nakamichi Y."/>
            <person name="Nakamura M."/>
            <person name="Namiki N."/>
            <person name="Negishi M."/>
            <person name="Ohta I."/>
            <person name="Ono N."/>
            <person name="Saji S."/>
            <person name="Sakai K."/>
            <person name="Shibata M."/>
            <person name="Shimokawa T."/>
            <person name="Shomura A."/>
            <person name="Song J."/>
            <person name="Takazaki Y."/>
            <person name="Terasawa K."/>
            <person name="Tsuji K."/>
            <person name="Waki K."/>
            <person name="Yamagata H."/>
            <person name="Yamane H."/>
            <person name="Yoshiki S."/>
            <person name="Yoshihara R."/>
            <person name="Yukawa K."/>
            <person name="Zhong H."/>
            <person name="Iwama H."/>
            <person name="Endo T."/>
            <person name="Ito H."/>
            <person name="Hahn J.H."/>
            <person name="Kim H.-I."/>
            <person name="Eun M.-Y."/>
            <person name="Yano M."/>
            <person name="Jiang J."/>
            <person name="Gojobori T."/>
        </authorList>
    </citation>
    <scope>NUCLEOTIDE SEQUENCE [LARGE SCALE GENOMIC DNA]</scope>
    <source>
        <strain>cv. Nipponbare</strain>
    </source>
</reference>
<reference key="2">
    <citation type="journal article" date="2005" name="Nature">
        <title>The map-based sequence of the rice genome.</title>
        <authorList>
            <consortium name="International rice genome sequencing project (IRGSP)"/>
        </authorList>
    </citation>
    <scope>NUCLEOTIDE SEQUENCE [LARGE SCALE GENOMIC DNA]</scope>
    <source>
        <strain>cv. Nipponbare</strain>
    </source>
</reference>
<reference key="3">
    <citation type="journal article" date="2008" name="Nucleic Acids Res.">
        <title>The rice annotation project database (RAP-DB): 2008 update.</title>
        <authorList>
            <consortium name="The rice annotation project (RAP)"/>
        </authorList>
    </citation>
    <scope>GENOME REANNOTATION</scope>
    <source>
        <strain>cv. Nipponbare</strain>
    </source>
</reference>
<reference key="4">
    <citation type="journal article" date="2013" name="Rice">
        <title>Improvement of the Oryza sativa Nipponbare reference genome using next generation sequence and optical map data.</title>
        <authorList>
            <person name="Kawahara Y."/>
            <person name="de la Bastide M."/>
            <person name="Hamilton J.P."/>
            <person name="Kanamori H."/>
            <person name="McCombie W.R."/>
            <person name="Ouyang S."/>
            <person name="Schwartz D.C."/>
            <person name="Tanaka T."/>
            <person name="Wu J."/>
            <person name="Zhou S."/>
            <person name="Childs K.L."/>
            <person name="Davidson R.M."/>
            <person name="Lin H."/>
            <person name="Quesada-Ocampo L."/>
            <person name="Vaillancourt B."/>
            <person name="Sakai H."/>
            <person name="Lee S.S."/>
            <person name="Kim J."/>
            <person name="Numa H."/>
            <person name="Itoh T."/>
            <person name="Buell C.R."/>
            <person name="Matsumoto T."/>
        </authorList>
    </citation>
    <scope>GENOME REANNOTATION</scope>
    <source>
        <strain>cv. Nipponbare</strain>
    </source>
</reference>
<reference key="5">
    <citation type="journal article" date="2005" name="PLoS Biol.">
        <title>The genomes of Oryza sativa: a history of duplications.</title>
        <authorList>
            <person name="Yu J."/>
            <person name="Wang J."/>
            <person name="Lin W."/>
            <person name="Li S."/>
            <person name="Li H."/>
            <person name="Zhou J."/>
            <person name="Ni P."/>
            <person name="Dong W."/>
            <person name="Hu S."/>
            <person name="Zeng C."/>
            <person name="Zhang J."/>
            <person name="Zhang Y."/>
            <person name="Li R."/>
            <person name="Xu Z."/>
            <person name="Li S."/>
            <person name="Li X."/>
            <person name="Zheng H."/>
            <person name="Cong L."/>
            <person name="Lin L."/>
            <person name="Yin J."/>
            <person name="Geng J."/>
            <person name="Li G."/>
            <person name="Shi J."/>
            <person name="Liu J."/>
            <person name="Lv H."/>
            <person name="Li J."/>
            <person name="Wang J."/>
            <person name="Deng Y."/>
            <person name="Ran L."/>
            <person name="Shi X."/>
            <person name="Wang X."/>
            <person name="Wu Q."/>
            <person name="Li C."/>
            <person name="Ren X."/>
            <person name="Wang J."/>
            <person name="Wang X."/>
            <person name="Li D."/>
            <person name="Liu D."/>
            <person name="Zhang X."/>
            <person name="Ji Z."/>
            <person name="Zhao W."/>
            <person name="Sun Y."/>
            <person name="Zhang Z."/>
            <person name="Bao J."/>
            <person name="Han Y."/>
            <person name="Dong L."/>
            <person name="Ji J."/>
            <person name="Chen P."/>
            <person name="Wu S."/>
            <person name="Liu J."/>
            <person name="Xiao Y."/>
            <person name="Bu D."/>
            <person name="Tan J."/>
            <person name="Yang L."/>
            <person name="Ye C."/>
            <person name="Zhang J."/>
            <person name="Xu J."/>
            <person name="Zhou Y."/>
            <person name="Yu Y."/>
            <person name="Zhang B."/>
            <person name="Zhuang S."/>
            <person name="Wei H."/>
            <person name="Liu B."/>
            <person name="Lei M."/>
            <person name="Yu H."/>
            <person name="Li Y."/>
            <person name="Xu H."/>
            <person name="Wei S."/>
            <person name="He X."/>
            <person name="Fang L."/>
            <person name="Zhang Z."/>
            <person name="Zhang Y."/>
            <person name="Huang X."/>
            <person name="Su Z."/>
            <person name="Tong W."/>
            <person name="Li J."/>
            <person name="Tong Z."/>
            <person name="Li S."/>
            <person name="Ye J."/>
            <person name="Wang L."/>
            <person name="Fang L."/>
            <person name="Lei T."/>
            <person name="Chen C.-S."/>
            <person name="Chen H.-C."/>
            <person name="Xu Z."/>
            <person name="Li H."/>
            <person name="Huang H."/>
            <person name="Zhang F."/>
            <person name="Xu H."/>
            <person name="Li N."/>
            <person name="Zhao C."/>
            <person name="Li S."/>
            <person name="Dong L."/>
            <person name="Huang Y."/>
            <person name="Li L."/>
            <person name="Xi Y."/>
            <person name="Qi Q."/>
            <person name="Li W."/>
            <person name="Zhang B."/>
            <person name="Hu W."/>
            <person name="Zhang Y."/>
            <person name="Tian X."/>
            <person name="Jiao Y."/>
            <person name="Liang X."/>
            <person name="Jin J."/>
            <person name="Gao L."/>
            <person name="Zheng W."/>
            <person name="Hao B."/>
            <person name="Liu S.-M."/>
            <person name="Wang W."/>
            <person name="Yuan L."/>
            <person name="Cao M."/>
            <person name="McDermott J."/>
            <person name="Samudrala R."/>
            <person name="Wang J."/>
            <person name="Wong G.K.-S."/>
            <person name="Yang H."/>
        </authorList>
    </citation>
    <scope>NUCLEOTIDE SEQUENCE [LARGE SCALE GENOMIC DNA]</scope>
    <source>
        <strain>cv. Nipponbare</strain>
    </source>
</reference>
<reference key="6">
    <citation type="journal article" date="2003" name="Science">
        <title>Collection, mapping, and annotation of over 28,000 cDNA clones from japonica rice.</title>
        <authorList>
            <consortium name="The rice full-length cDNA consortium"/>
        </authorList>
    </citation>
    <scope>NUCLEOTIDE SEQUENCE [LARGE SCALE MRNA]</scope>
    <source>
        <strain>cv. Nipponbare</strain>
    </source>
</reference>
<reference key="7">
    <citation type="journal article" date="2003" name="Plant Mol. Biol.">
        <title>Identification of rice (Oryza sativa) proteins linked to the cyclin-mediated regulation of the cell cycle.</title>
        <authorList>
            <person name="Cooper B."/>
            <person name="Hutchison D."/>
            <person name="Park S."/>
            <person name="Guimil S."/>
            <person name="Luginbuehl P."/>
            <person name="Ellero C."/>
            <person name="Goff S.A."/>
            <person name="Glazebrook J."/>
        </authorList>
    </citation>
    <scope>NUCLEOTIDE SEQUENCE [MRNA] OF 1-242</scope>
</reference>
<evidence type="ECO:0000250" key="1"/>
<evidence type="ECO:0000305" key="2"/>
<feature type="chain" id="PRO_0000420178" description="Probable glycerol-3-phosphate dehydrogenase [NAD(+)] 2, cytosolic">
    <location>
        <begin position="1"/>
        <end position="467"/>
    </location>
</feature>
<feature type="active site" description="Proton acceptor" evidence="1">
    <location>
        <position position="284"/>
    </location>
</feature>
<feature type="binding site" evidence="1">
    <location>
        <begin position="47"/>
        <end position="52"/>
    </location>
    <ligand>
        <name>NAD(+)</name>
        <dbReference type="ChEBI" id="CHEBI:57540"/>
    </ligand>
</feature>
<feature type="binding site" evidence="1">
    <location>
        <position position="195"/>
    </location>
    <ligand>
        <name>NAD(+)</name>
        <dbReference type="ChEBI" id="CHEBI:57540"/>
    </ligand>
</feature>
<feature type="binding site" evidence="1">
    <location>
        <position position="195"/>
    </location>
    <ligand>
        <name>substrate</name>
    </ligand>
</feature>
<feature type="binding site" evidence="1">
    <location>
        <position position="234"/>
    </location>
    <ligand>
        <name>NAD(+)</name>
        <dbReference type="ChEBI" id="CHEBI:57540"/>
    </ligand>
</feature>
<feature type="binding site" evidence="1">
    <location>
        <begin position="346"/>
        <end position="347"/>
    </location>
    <ligand>
        <name>substrate</name>
    </ligand>
</feature>
<feature type="binding site" evidence="1">
    <location>
        <position position="346"/>
    </location>
    <ligand>
        <name>NAD(+)</name>
        <dbReference type="ChEBI" id="CHEBI:57540"/>
    </ligand>
</feature>
<feature type="binding site" evidence="1">
    <location>
        <position position="374"/>
    </location>
    <ligand>
        <name>NAD(+)</name>
        <dbReference type="ChEBI" id="CHEBI:57540"/>
    </ligand>
</feature>
<feature type="sequence conflict" description="In Ref. 7; AAO72676." evidence="2" ref="7">
    <original>NGL</original>
    <variation>KRV</variation>
    <location>
        <begin position="163"/>
        <end position="165"/>
    </location>
</feature>
<feature type="sequence conflict" description="In Ref. 6; AK073318." evidence="2" ref="6">
    <original>M</original>
    <variation>V</variation>
    <location>
        <position position="394"/>
    </location>
</feature>
<organism>
    <name type="scientific">Oryza sativa subsp. japonica</name>
    <name type="common">Rice</name>
    <dbReference type="NCBI Taxonomy" id="39947"/>
    <lineage>
        <taxon>Eukaryota</taxon>
        <taxon>Viridiplantae</taxon>
        <taxon>Streptophyta</taxon>
        <taxon>Embryophyta</taxon>
        <taxon>Tracheophyta</taxon>
        <taxon>Spermatophyta</taxon>
        <taxon>Magnoliopsida</taxon>
        <taxon>Liliopsida</taxon>
        <taxon>Poales</taxon>
        <taxon>Poaceae</taxon>
        <taxon>BOP clade</taxon>
        <taxon>Oryzoideae</taxon>
        <taxon>Oryzeae</taxon>
        <taxon>Oryzinae</taxon>
        <taxon>Oryza</taxon>
        <taxon>Oryza sativa</taxon>
    </lineage>
</organism>
<sequence length="467" mass="51583">MGGAEDAPRAAAANGHGNGATVEEKLDELRRLLGKADGDPLRIVGVGAGAWGSVFCALMQDAYGHLRDKVQVRIWRRPGRAVDRATAEHLFEVINAREDVLRRLIRRCAYLKYVEGRLGDRTLYADEILRDGFCLNMIDTPLCPLKVVTNLQEAVWDADIVINGLPSTDTREVFGEIGRYWKERITAPIILSLAKGIEASLDPLPRIITPTQMISNATGVPLENILYLGGPNIASEIYNKEYANARICGADKWRKPLAKFLRQPHFIVWDNSDLITHEVMGGLKNVYAIGAGMVAALTNESATSKSVYFALCTSEMIYITHLLEEEPEKLAGPLLADTYVTLLKGRNAWYGQKLAKGELTLEMGDSIKGKGTIQGVSAVNAFYELLSQDSLSVMHPEANRSVAPVEMCPILKALYKILIKRELPPDSILQAIRDETMYDPRERIEMAQGHSLYRPSLLGQPKGDAKA</sequence>
<accession>Q8S2G5</accession>
<accession>A0A0N7KDX1</accession>
<accession>Q84VD0</accession>
<keyword id="KW-0963">Cytoplasm</keyword>
<keyword id="KW-0520">NAD</keyword>
<keyword id="KW-0560">Oxidoreductase</keyword>
<keyword id="KW-1185">Reference proteome</keyword>
<comment type="function">
    <text evidence="1">May be involved in cell redox homeostasis.</text>
</comment>
<comment type="catalytic activity">
    <reaction>
        <text>sn-glycerol 3-phosphate + NAD(+) = dihydroxyacetone phosphate + NADH + H(+)</text>
        <dbReference type="Rhea" id="RHEA:11092"/>
        <dbReference type="ChEBI" id="CHEBI:15378"/>
        <dbReference type="ChEBI" id="CHEBI:57540"/>
        <dbReference type="ChEBI" id="CHEBI:57597"/>
        <dbReference type="ChEBI" id="CHEBI:57642"/>
        <dbReference type="ChEBI" id="CHEBI:57945"/>
        <dbReference type="EC" id="1.1.1.8"/>
    </reaction>
</comment>
<comment type="subcellular location">
    <subcellularLocation>
        <location evidence="1">Cytoplasm</location>
        <location evidence="1">Cytosol</location>
    </subcellularLocation>
</comment>
<comment type="similarity">
    <text evidence="2">Belongs to the NAD-dependent glycerol-3-phosphate dehydrogenase family.</text>
</comment>
<comment type="sequence caution" evidence="2">
    <conflict type="erroneous initiation">
        <sequence resource="EMBL-CDS" id="AAO72676"/>
    </conflict>
    <text>Extended N-terminus.</text>
</comment>
<gene>
    <name type="ordered locus">Os01g0801600</name>
    <name type="ordered locus">LOC_Os01g58740</name>
    <name type="ORF">OsJ_03778</name>
    <name type="ORF">P0003D09.23</name>
</gene>
<dbReference type="EC" id="1.1.1.8"/>
<dbReference type="EMBL" id="AP003221">
    <property type="protein sequence ID" value="BAB86423.1"/>
    <property type="molecule type" value="Genomic_DNA"/>
</dbReference>
<dbReference type="EMBL" id="AP008207">
    <property type="protein sequence ID" value="BAF06455.1"/>
    <property type="molecule type" value="Genomic_DNA"/>
</dbReference>
<dbReference type="EMBL" id="AP014957">
    <property type="protein sequence ID" value="BAS74801.1"/>
    <property type="molecule type" value="Genomic_DNA"/>
</dbReference>
<dbReference type="EMBL" id="CM000138">
    <property type="protein sequence ID" value="EAZ13855.1"/>
    <property type="molecule type" value="Genomic_DNA"/>
</dbReference>
<dbReference type="EMBL" id="AK073318">
    <property type="status" value="NOT_ANNOTATED_CDS"/>
    <property type="molecule type" value="mRNA"/>
</dbReference>
<dbReference type="EMBL" id="AY224556">
    <property type="protein sequence ID" value="AAO72676.1"/>
    <property type="status" value="ALT_INIT"/>
    <property type="molecule type" value="mRNA"/>
</dbReference>
<dbReference type="RefSeq" id="XP_015617993.1">
    <property type="nucleotide sequence ID" value="XM_015762507.1"/>
</dbReference>
<dbReference type="SMR" id="Q8S2G5"/>
<dbReference type="STRING" id="39947.Q8S2G5"/>
<dbReference type="PaxDb" id="39947-Q8S2G5"/>
<dbReference type="EnsemblPlants" id="Os01t0801600-01">
    <property type="protein sequence ID" value="Os01t0801600-01"/>
    <property type="gene ID" value="Os01g0801600"/>
</dbReference>
<dbReference type="Gramene" id="Os01t0801600-01">
    <property type="protein sequence ID" value="Os01t0801600-01"/>
    <property type="gene ID" value="Os01g0801600"/>
</dbReference>
<dbReference type="KEGG" id="dosa:Os01g0801600"/>
<dbReference type="eggNOG" id="KOG2711">
    <property type="taxonomic scope" value="Eukaryota"/>
</dbReference>
<dbReference type="HOGENOM" id="CLU_029303_2_0_1"/>
<dbReference type="InParanoid" id="Q8S2G5"/>
<dbReference type="OMA" id="CHATTRE"/>
<dbReference type="OrthoDB" id="10263760at2759"/>
<dbReference type="PlantReactome" id="R-OSA-1119402">
    <property type="pathway name" value="Phospholipid biosynthesis I"/>
</dbReference>
<dbReference type="Proteomes" id="UP000000763">
    <property type="component" value="Chromosome 1"/>
</dbReference>
<dbReference type="Proteomes" id="UP000007752">
    <property type="component" value="Chromosome 1"/>
</dbReference>
<dbReference type="Proteomes" id="UP000059680">
    <property type="component" value="Chromosome 1"/>
</dbReference>
<dbReference type="GO" id="GO:0005829">
    <property type="term" value="C:cytosol"/>
    <property type="evidence" value="ECO:0000318"/>
    <property type="project" value="GO_Central"/>
</dbReference>
<dbReference type="GO" id="GO:0141152">
    <property type="term" value="F:glycerol-3-phosphate dehydrogenase (NAD+) activity"/>
    <property type="evidence" value="ECO:0007669"/>
    <property type="project" value="UniProtKB-EC"/>
</dbReference>
<dbReference type="GO" id="GO:0051287">
    <property type="term" value="F:NAD binding"/>
    <property type="evidence" value="ECO:0007669"/>
    <property type="project" value="InterPro"/>
</dbReference>
<dbReference type="GO" id="GO:0005975">
    <property type="term" value="P:carbohydrate metabolic process"/>
    <property type="evidence" value="ECO:0007669"/>
    <property type="project" value="InterPro"/>
</dbReference>
<dbReference type="GO" id="GO:0046168">
    <property type="term" value="P:glycerol-3-phosphate catabolic process"/>
    <property type="evidence" value="ECO:0007669"/>
    <property type="project" value="InterPro"/>
</dbReference>
<dbReference type="GO" id="GO:0006072">
    <property type="term" value="P:glycerol-3-phosphate metabolic process"/>
    <property type="evidence" value="ECO:0000318"/>
    <property type="project" value="GO_Central"/>
</dbReference>
<dbReference type="FunFam" id="1.10.1040.10:FF:000012">
    <property type="entry name" value="Glycerol-3-phosphate dehydrogenase [NAD(+)]"/>
    <property type="match status" value="1"/>
</dbReference>
<dbReference type="FunFam" id="3.40.50.720:FF:000109">
    <property type="entry name" value="Glycerol-3-phosphate dehydrogenase [NAD(+)]"/>
    <property type="match status" value="1"/>
</dbReference>
<dbReference type="FunFam" id="3.40.50.720:FF:000229">
    <property type="entry name" value="Glycerol-3-phosphate dehydrogenase [NAD(+)]"/>
    <property type="match status" value="1"/>
</dbReference>
<dbReference type="Gene3D" id="1.10.1040.10">
    <property type="entry name" value="N-(1-d-carboxylethyl)-l-norvaline Dehydrogenase, domain 2"/>
    <property type="match status" value="1"/>
</dbReference>
<dbReference type="Gene3D" id="3.40.50.720">
    <property type="entry name" value="NAD(P)-binding Rossmann-like Domain"/>
    <property type="match status" value="2"/>
</dbReference>
<dbReference type="InterPro" id="IPR008927">
    <property type="entry name" value="6-PGluconate_DH-like_C_sf"/>
</dbReference>
<dbReference type="InterPro" id="IPR013328">
    <property type="entry name" value="6PGD_dom2"/>
</dbReference>
<dbReference type="InterPro" id="IPR006168">
    <property type="entry name" value="G3P_DH_NAD-dep"/>
</dbReference>
<dbReference type="InterPro" id="IPR006109">
    <property type="entry name" value="G3P_DH_NAD-dep_C"/>
</dbReference>
<dbReference type="InterPro" id="IPR011128">
    <property type="entry name" value="G3P_DH_NAD-dep_N"/>
</dbReference>
<dbReference type="InterPro" id="IPR036291">
    <property type="entry name" value="NAD(P)-bd_dom_sf"/>
</dbReference>
<dbReference type="PANTHER" id="PTHR11728">
    <property type="entry name" value="GLYCEROL-3-PHOSPHATE DEHYDROGENASE"/>
    <property type="match status" value="1"/>
</dbReference>
<dbReference type="PANTHER" id="PTHR11728:SF38">
    <property type="entry name" value="GLYCEROL-3-PHOSPHATE DEHYDROGENASE [NAD(+)] 2, CYTOSOLIC-RELATED"/>
    <property type="match status" value="1"/>
</dbReference>
<dbReference type="Pfam" id="PF07479">
    <property type="entry name" value="NAD_Gly3P_dh_C"/>
    <property type="match status" value="1"/>
</dbReference>
<dbReference type="Pfam" id="PF01210">
    <property type="entry name" value="NAD_Gly3P_dh_N"/>
    <property type="match status" value="1"/>
</dbReference>
<dbReference type="PRINTS" id="PR00077">
    <property type="entry name" value="GPDHDRGNASE"/>
</dbReference>
<dbReference type="SUPFAM" id="SSF48179">
    <property type="entry name" value="6-phosphogluconate dehydrogenase C-terminal domain-like"/>
    <property type="match status" value="1"/>
</dbReference>
<dbReference type="SUPFAM" id="SSF51735">
    <property type="entry name" value="NAD(P)-binding Rossmann-fold domains"/>
    <property type="match status" value="1"/>
</dbReference>
<protein>
    <recommendedName>
        <fullName>Probable glycerol-3-phosphate dehydrogenase [NAD(+)] 2, cytosolic</fullName>
        <ecNumber>1.1.1.8</ecNumber>
    </recommendedName>
</protein>
<proteinExistence type="evidence at transcript level"/>